<keyword id="KW-1185">Reference proteome</keyword>
<keyword id="KW-0346">Stress response</keyword>
<proteinExistence type="inferred from homology"/>
<gene>
    <name evidence="1 3" type="primary">iprA</name>
    <name evidence="5" type="synonym">yaiV</name>
    <name evidence="5" type="ordered locus">STM0374</name>
</gene>
<accession>Q8ZRF7</accession>
<dbReference type="EMBL" id="AE006468">
    <property type="protein sequence ID" value="AAL19328.1"/>
    <property type="molecule type" value="Genomic_DNA"/>
</dbReference>
<dbReference type="RefSeq" id="NP_459369.1">
    <property type="nucleotide sequence ID" value="NC_003197.2"/>
</dbReference>
<dbReference type="RefSeq" id="WP_000950242.1">
    <property type="nucleotide sequence ID" value="NC_003197.2"/>
</dbReference>
<dbReference type="SMR" id="Q8ZRF7"/>
<dbReference type="STRING" id="99287.STM0374"/>
<dbReference type="PaxDb" id="99287-STM0374"/>
<dbReference type="DNASU" id="1251893"/>
<dbReference type="GeneID" id="1251893"/>
<dbReference type="KEGG" id="stm:STM0374"/>
<dbReference type="PATRIC" id="fig|99287.12.peg.397"/>
<dbReference type="HOGENOM" id="CLU_080453_0_0_6"/>
<dbReference type="OMA" id="MAEWDET"/>
<dbReference type="PhylomeDB" id="Q8ZRF7"/>
<dbReference type="BioCyc" id="SENT99287:STM0374-MONOMER"/>
<dbReference type="Proteomes" id="UP000001014">
    <property type="component" value="Chromosome"/>
</dbReference>
<dbReference type="GO" id="GO:0005829">
    <property type="term" value="C:cytosol"/>
    <property type="evidence" value="ECO:0000318"/>
    <property type="project" value="GO_Central"/>
</dbReference>
<dbReference type="GO" id="GO:0003700">
    <property type="term" value="F:DNA-binding transcription factor activity"/>
    <property type="evidence" value="ECO:0000318"/>
    <property type="project" value="GO_Central"/>
</dbReference>
<dbReference type="GO" id="GO:0006979">
    <property type="term" value="P:response to oxidative stress"/>
    <property type="evidence" value="ECO:0007669"/>
    <property type="project" value="UniProtKB-UniRule"/>
</dbReference>
<dbReference type="CDD" id="cd00038">
    <property type="entry name" value="CAP_ED"/>
    <property type="match status" value="1"/>
</dbReference>
<dbReference type="Gene3D" id="2.60.120.10">
    <property type="entry name" value="Jelly Rolls"/>
    <property type="match status" value="1"/>
</dbReference>
<dbReference type="HAMAP" id="MF_02072">
    <property type="entry name" value="IprA"/>
    <property type="match status" value="1"/>
</dbReference>
<dbReference type="InterPro" id="IPR000595">
    <property type="entry name" value="cNMP-bd_dom"/>
</dbReference>
<dbReference type="InterPro" id="IPR018490">
    <property type="entry name" value="cNMP-bd_dom_sf"/>
</dbReference>
<dbReference type="InterPro" id="IPR041687">
    <property type="entry name" value="HTH_46"/>
</dbReference>
<dbReference type="InterPro" id="IPR034719">
    <property type="entry name" value="IprA"/>
</dbReference>
<dbReference type="InterPro" id="IPR014710">
    <property type="entry name" value="RmlC-like_jellyroll"/>
</dbReference>
<dbReference type="NCBIfam" id="NF008810">
    <property type="entry name" value="PRK11832.1"/>
    <property type="match status" value="1"/>
</dbReference>
<dbReference type="Pfam" id="PF15977">
    <property type="entry name" value="HTH_46"/>
    <property type="match status" value="1"/>
</dbReference>
<dbReference type="SUPFAM" id="SSF51206">
    <property type="entry name" value="cAMP-binding domain-like"/>
    <property type="match status" value="1"/>
</dbReference>
<organism>
    <name type="scientific">Salmonella typhimurium (strain LT2 / SGSC1412 / ATCC 700720)</name>
    <dbReference type="NCBI Taxonomy" id="99287"/>
    <lineage>
        <taxon>Bacteria</taxon>
        <taxon>Pseudomonadati</taxon>
        <taxon>Pseudomonadota</taxon>
        <taxon>Gammaproteobacteria</taxon>
        <taxon>Enterobacterales</taxon>
        <taxon>Enterobacteriaceae</taxon>
        <taxon>Salmonella</taxon>
    </lineage>
</organism>
<name>IPRA_SALTY</name>
<feature type="chain" id="PRO_0000437676" description="Inhibitor of hydrogen peroxide resistance">
    <location>
        <begin position="1"/>
        <end position="207"/>
    </location>
</feature>
<feature type="DNA-binding region" description="H-T-H motif" evidence="1 4">
    <location>
        <begin position="163"/>
        <end position="182"/>
    </location>
</feature>
<reference key="1">
    <citation type="journal article" date="2001" name="Nature">
        <title>Complete genome sequence of Salmonella enterica serovar Typhimurium LT2.</title>
        <authorList>
            <person name="McClelland M."/>
            <person name="Sanderson K.E."/>
            <person name="Spieth J."/>
            <person name="Clifton S.W."/>
            <person name="Latreille P."/>
            <person name="Courtney L."/>
            <person name="Porwollik S."/>
            <person name="Ali J."/>
            <person name="Dante M."/>
            <person name="Du F."/>
            <person name="Hou S."/>
            <person name="Layman D."/>
            <person name="Leonard S."/>
            <person name="Nguyen C."/>
            <person name="Scott K."/>
            <person name="Holmes A."/>
            <person name="Grewal N."/>
            <person name="Mulvaney E."/>
            <person name="Ryan E."/>
            <person name="Sun H."/>
            <person name="Florea L."/>
            <person name="Miller W."/>
            <person name="Stoneking T."/>
            <person name="Nhan M."/>
            <person name="Waterston R."/>
            <person name="Wilson R.K."/>
        </authorList>
    </citation>
    <scope>NUCLEOTIDE SEQUENCE [LARGE SCALE GENOMIC DNA]</scope>
    <source>
        <strain>LT2 / SGSC1412 / ATCC 700720</strain>
    </source>
</reference>
<reference key="2">
    <citation type="journal article" date="2016" name="J. Bacteriol.">
        <title>The bacterial iprA gene is conserved across Enterobacteriaceae, is involved in oxidative stress resistance, and influences gene expression in Salmonella enterica serovar typhimurium.</title>
        <authorList>
            <person name="Herman A."/>
            <person name="Serfecz J."/>
            <person name="Kinnally A."/>
            <person name="Crosby K."/>
            <person name="Youngman M."/>
            <person name="Wykoff D."/>
            <person name="Wilson J.W."/>
        </authorList>
    </citation>
    <scope>FUNCTION</scope>
    <scope>DOMAIN</scope>
    <scope>DISRUPTION PHENOTYPE</scope>
</reference>
<protein>
    <recommendedName>
        <fullName evidence="1 3">Inhibitor of hydrogen peroxide resistance</fullName>
    </recommendedName>
</protein>
<evidence type="ECO:0000255" key="1">
    <source>
        <dbReference type="HAMAP-Rule" id="MF_02072"/>
    </source>
</evidence>
<evidence type="ECO:0000269" key="2">
    <source>
    </source>
</evidence>
<evidence type="ECO:0000303" key="3">
    <source>
    </source>
</evidence>
<evidence type="ECO:0000305" key="4"/>
<evidence type="ECO:0000312" key="5">
    <source>
        <dbReference type="EMBL" id="AAL19328.1"/>
    </source>
</evidence>
<comment type="function">
    <text evidence="1 2">Involved in oxidative stress resistance.</text>
</comment>
<comment type="domain">
    <text evidence="2">Deletion of the N- or the C-terminal 10 amino acids abolishes activity, while a region that includes amino acids 56 to 80 is dispensable for activity. Contains a predicted HTH motif, which may bind DNA.</text>
</comment>
<comment type="disruption phenotype">
    <text evidence="2">Deletion mutants display increased resistance to oxidative stress, increased catalase activity and increased survival in macrophage cells. Deletion results in the altered expression of 82 and 56 genes in log and stationary phase, respectively.</text>
</comment>
<comment type="similarity">
    <text evidence="1 4">Belongs to the IprA family.</text>
</comment>
<sequence length="207" mass="23733">MLSLSKPLQEFYRLDKCLSKHGTRFEFVNDKEIICSPDESNTHTFVILEGVVSLVRGDKVLIGIVQAPFIFGLADGVAKKEAQYKLIAESGCIGYRLSSSQTLAIIEQNQLWREAFCWIVWKSQVLELRDKQLIGNNSYDQIRATLMTMIEWDEELRSRIGVMNYIHQRTRVSRSVVAEVLAALRKGNYIEMNKGKLISINRLPSEY</sequence>